<evidence type="ECO:0000250" key="1">
    <source>
        <dbReference type="UniProtKB" id="P02621"/>
    </source>
</evidence>
<evidence type="ECO:0000250" key="2">
    <source>
        <dbReference type="UniProtKB" id="P02622"/>
    </source>
</evidence>
<evidence type="ECO:0000250" key="3">
    <source>
        <dbReference type="UniProtKB" id="P02624"/>
    </source>
</evidence>
<evidence type="ECO:0000255" key="4"/>
<evidence type="ECO:0000255" key="5">
    <source>
        <dbReference type="PROSITE-ProRule" id="PRU00448"/>
    </source>
</evidence>
<evidence type="ECO:0000269" key="6">
    <source>
    </source>
</evidence>
<evidence type="ECO:0000303" key="7">
    <source>
    </source>
</evidence>
<evidence type="ECO:0000305" key="8"/>
<comment type="function">
    <text evidence="2 3">In muscle, parvalbumin is thought to be involved in relaxation after contraction. It binds two calcium ions (By similarity).</text>
</comment>
<comment type="miscellaneous">
    <text evidence="2 6">Is regarded as an important allergen.</text>
</comment>
<comment type="miscellaneous">
    <text evidence="6">On the 2D-gel the determined pI of this protein is: 4.20, its MW is: 11.20 kDa.</text>
</comment>
<comment type="similarity">
    <text evidence="4">Belongs to the parvalbumin family.</text>
</comment>
<keyword id="KW-0007">Acetylation</keyword>
<keyword id="KW-0020">Allergen</keyword>
<keyword id="KW-0106">Calcium</keyword>
<keyword id="KW-0903">Direct protein sequencing</keyword>
<keyword id="KW-0479">Metal-binding</keyword>
<keyword id="KW-0514">Muscle protein</keyword>
<feature type="chain" id="PRO_0000399420" description="Parvalbumin beta 3">
    <location>
        <begin position="1"/>
        <end position="75" status="greater than"/>
    </location>
</feature>
<feature type="domain" description="EF-hand" evidence="5">
    <location>
        <begin position="26"/>
        <end position="61"/>
    </location>
</feature>
<feature type="binding site" evidence="5">
    <location>
        <position position="39"/>
    </location>
    <ligand>
        <name>Ca(2+)</name>
        <dbReference type="ChEBI" id="CHEBI:29108"/>
        <label>1</label>
    </ligand>
</feature>
<feature type="binding site" evidence="5">
    <location>
        <position position="41"/>
    </location>
    <ligand>
        <name>Ca(2+)</name>
        <dbReference type="ChEBI" id="CHEBI:29108"/>
        <label>1</label>
    </ligand>
</feature>
<feature type="binding site" evidence="5">
    <location>
        <position position="43"/>
    </location>
    <ligand>
        <name>Ca(2+)</name>
        <dbReference type="ChEBI" id="CHEBI:29108"/>
        <label>1</label>
    </ligand>
</feature>
<feature type="binding site" evidence="1">
    <location>
        <position position="45"/>
    </location>
    <ligand>
        <name>Ca(2+)</name>
        <dbReference type="ChEBI" id="CHEBI:29108"/>
        <label>1</label>
    </ligand>
</feature>
<feature type="binding site" evidence="1">
    <location>
        <position position="47"/>
    </location>
    <ligand>
        <name>Ca(2+)</name>
        <dbReference type="ChEBI" id="CHEBI:29108"/>
        <label>1</label>
    </ligand>
</feature>
<feature type="binding site" evidence="5">
    <location>
        <position position="50"/>
    </location>
    <ligand>
        <name>Ca(2+)</name>
        <dbReference type="ChEBI" id="CHEBI:29108"/>
        <label>1</label>
    </ligand>
</feature>
<feature type="modified residue" description="N-acetylalanine" evidence="6">
    <location>
        <position position="1"/>
    </location>
</feature>
<feature type="unsure residue" description="I or L" evidence="6">
    <location>
        <position position="5"/>
    </location>
</feature>
<feature type="unsure residue" description="L or I" evidence="6">
    <location>
        <position position="6"/>
    </location>
</feature>
<feature type="unsure residue" description="I or L" evidence="6">
    <location>
        <position position="11"/>
    </location>
</feature>
<feature type="unsure residue" description="L or I" evidence="6">
    <location>
        <position position="15"/>
    </location>
</feature>
<feature type="unsure residue" description="K or Q" evidence="6">
    <location>
        <position position="16"/>
    </location>
</feature>
<feature type="unsure residue" description="K or Q" evidence="6">
    <location>
        <position position="27"/>
    </location>
</feature>
<feature type="unsure residue" description="K or Q" evidence="6">
    <location>
        <position position="32"/>
    </location>
</feature>
<feature type="unsure residue" description="K or Q" evidence="6">
    <location>
        <position position="33"/>
    </location>
</feature>
<feature type="unsure residue" description="I or L" evidence="6">
    <location>
        <position position="38"/>
    </location>
</feature>
<feature type="unsure residue" description="Q or K" evidence="6">
    <location>
        <position position="40"/>
    </location>
</feature>
<feature type="unsure residue" description="K or Q" evidence="6">
    <location>
        <position position="42"/>
    </location>
</feature>
<feature type="unsure residue" description="I or L" evidence="6">
    <location>
        <position position="46"/>
    </location>
</feature>
<feature type="unsure residue" description="L or I" evidence="6">
    <location>
        <position position="51"/>
    </location>
</feature>
<feature type="unsure residue" description="K or Q" evidence="6">
    <location>
        <position position="52"/>
    </location>
</feature>
<feature type="unsure residue" description="L or I" evidence="6">
    <location>
        <position position="53"/>
    </location>
</feature>
<feature type="unsure residue" description="L or I" evidence="6">
    <location>
        <position position="55"/>
    </location>
</feature>
<feature type="unsure residue" description="Q or K" evidence="6">
    <location>
        <position position="56"/>
    </location>
</feature>
<feature type="unsure residue" description="L or I" evidence="6">
    <location>
        <position position="65"/>
    </location>
</feature>
<feature type="unsure residue" description="K or Q" evidence="6">
    <location>
        <position position="71"/>
    </location>
</feature>
<feature type="unsure residue" description="L or I" evidence="6">
    <location>
        <position position="74"/>
    </location>
</feature>
<feature type="unsure residue" description="K or Q" evidence="6">
    <location>
        <position position="75"/>
    </location>
</feature>
<feature type="non-consecutive residues" evidence="7">
    <location>
        <begin position="32"/>
        <end position="33"/>
    </location>
</feature>
<feature type="non-terminal residue" evidence="7">
    <location>
        <position position="75"/>
    </location>
</feature>
<organism>
    <name type="scientific">Merluccius gayi</name>
    <name type="common">South Pacific hake</name>
    <name type="synonym">Merluccius gayi peruanus</name>
    <dbReference type="NCBI Taxonomy" id="89948"/>
    <lineage>
        <taxon>Eukaryota</taxon>
        <taxon>Metazoa</taxon>
        <taxon>Chordata</taxon>
        <taxon>Craniata</taxon>
        <taxon>Vertebrata</taxon>
        <taxon>Euteleostomi</taxon>
        <taxon>Actinopterygii</taxon>
        <taxon>Neopterygii</taxon>
        <taxon>Teleostei</taxon>
        <taxon>Neoteleostei</taxon>
        <taxon>Acanthomorphata</taxon>
        <taxon>Zeiogadaria</taxon>
        <taxon>Gadariae</taxon>
        <taxon>Gadiformes</taxon>
        <taxon>Gadoidei</taxon>
        <taxon>Merlucciidae</taxon>
        <taxon>Merluccius</taxon>
    </lineage>
</organism>
<reference evidence="8" key="1">
    <citation type="journal article" date="2010" name="J. Proteome Res.">
        <title>Extensive de novo sequencing of new parvalbumin isoforms using a novel combination of bottom-up proteomics, accurate molecular mass measurement by FTICR-MS, and selected MS/MS ion monitoring.</title>
        <authorList>
            <person name="Carrera M."/>
            <person name="Canas B."/>
            <person name="Vazquez J."/>
            <person name="Gallardo J.M."/>
        </authorList>
    </citation>
    <scope>PROTEIN SEQUENCE</scope>
    <scope>ACETYLATION AT ALA-1</scope>
    <source>
        <tissue evidence="6">Muscle</tissue>
    </source>
</reference>
<name>PRVB3_MERGA</name>
<protein>
    <recommendedName>
        <fullName evidence="7">Parvalbumin beta 3</fullName>
    </recommendedName>
</protein>
<dbReference type="SMR" id="P86758"/>
<dbReference type="iPTMnet" id="P86758"/>
<dbReference type="GO" id="GO:0005737">
    <property type="term" value="C:cytoplasm"/>
    <property type="evidence" value="ECO:0007669"/>
    <property type="project" value="TreeGrafter"/>
</dbReference>
<dbReference type="GO" id="GO:0005509">
    <property type="term" value="F:calcium ion binding"/>
    <property type="evidence" value="ECO:0007669"/>
    <property type="project" value="InterPro"/>
</dbReference>
<dbReference type="Gene3D" id="1.10.238.10">
    <property type="entry name" value="EF-hand"/>
    <property type="match status" value="1"/>
</dbReference>
<dbReference type="InterPro" id="IPR011992">
    <property type="entry name" value="EF-hand-dom_pair"/>
</dbReference>
<dbReference type="InterPro" id="IPR018247">
    <property type="entry name" value="EF_Hand_1_Ca_BS"/>
</dbReference>
<dbReference type="InterPro" id="IPR002048">
    <property type="entry name" value="EF_hand_dom"/>
</dbReference>
<dbReference type="InterPro" id="IPR008080">
    <property type="entry name" value="Parvalbumin"/>
</dbReference>
<dbReference type="PANTHER" id="PTHR11653:SF12">
    <property type="entry name" value="PARVALBUMIN"/>
    <property type="match status" value="1"/>
</dbReference>
<dbReference type="PANTHER" id="PTHR11653">
    <property type="entry name" value="PARVALBUMIN ALPHA"/>
    <property type="match status" value="1"/>
</dbReference>
<dbReference type="Pfam" id="PF13405">
    <property type="entry name" value="EF-hand_6"/>
    <property type="match status" value="1"/>
</dbReference>
<dbReference type="PRINTS" id="PR01697">
    <property type="entry name" value="PARVALBUMIN"/>
</dbReference>
<dbReference type="SUPFAM" id="SSF47473">
    <property type="entry name" value="EF-hand"/>
    <property type="match status" value="1"/>
</dbReference>
<dbReference type="PROSITE" id="PS00018">
    <property type="entry name" value="EF_HAND_1"/>
    <property type="match status" value="1"/>
</dbReference>
<dbReference type="PROSITE" id="PS50222">
    <property type="entry name" value="EF_HAND_2"/>
    <property type="match status" value="1"/>
</dbReference>
<accession>P86758</accession>
<proteinExistence type="evidence at protein level"/>
<sequence length="75" mass="8146">AFSGILAEADIAAALKACEAADSFNYKAFFAKKAFFVIDQDKSGFIEEDELKLFLQVFSAGARALTDAETKAFLK</sequence>